<keyword id="KW-0004">4Fe-4S</keyword>
<keyword id="KW-0903">Direct protein sequencing</keyword>
<keyword id="KW-0312">Gluconeogenesis</keyword>
<keyword id="KW-0408">Iron</keyword>
<keyword id="KW-0411">Iron-sulfur</keyword>
<keyword id="KW-0456">Lyase</keyword>
<keyword id="KW-0479">Metal-binding</keyword>
<feature type="chain" id="PRO_0000171915" description="L-serine dehydratase, alpha chain">
    <location>
        <begin position="1"/>
        <end position="292"/>
    </location>
</feature>
<feature type="sequence conflict" description="In Ref. 2; AA sequence." evidence="1" ref="2">
    <location>
        <position position="6"/>
    </location>
</feature>
<feature type="sequence conflict" description="In Ref. 2; AA sequence." evidence="1" ref="2">
    <original>C</original>
    <variation>Q</variation>
    <location>
        <position position="12"/>
    </location>
</feature>
<name>SDHA_PEPAS</name>
<sequence length="292" mass="30770">MLNTAREIIDVCNERGIKIYDLVLEEEIKNSHTTEEEIRKKLDAVIDVMHASATKNLTQSDVTEYKMIDGFAKRTYEYANSGKSIVGDFLAKAMAMAFSTSEVNASMGKIVAAPTAGSSGIMPAMLVAATEKYNFDRTTIQNGFLTSIGIGQVITKYATFAGAEGGCQAECGSASAMAAAALVEMLGGTVEQALHAASITIINVLGLVCDPIAGLVQYPCTFRNASGVINAFISADLALAGVESLVPFDEVVIAMGEVGNSMIEALRETGLGGLAGSKTGQKIRRDFLKEGD</sequence>
<reference key="1">
    <citation type="journal article" date="1997" name="J. Bacteriol.">
        <title>Cloning and expression of the two genes coding for L-serine dehydratase from Peptostreptococcus asaccharolyticus: relationship of the iron-sulfur protein to both L-serine dehydratases from Escherichia coli.</title>
        <authorList>
            <person name="Hofmeister A.E."/>
            <person name="Textor S."/>
            <person name="Buckel W."/>
        </authorList>
    </citation>
    <scope>NUCLEOTIDE SEQUENCE [GENOMIC DNA]</scope>
    <source>
        <strain>ATCC 14963 / DSM 20463 / JCM 1765 / NCIMB 10074 / NCTC 11461 / UW 228</strain>
    </source>
</reference>
<reference key="2">
    <citation type="journal article" date="1991" name="Eur. J. Biochem.">
        <title>Purification and properties of an iron-sulfur-containing and pyridoxal-phosphate-independent L-serine dehydratase from Peptostreptococcus asaccharolyticus.</title>
        <authorList>
            <person name="Grabowski R."/>
            <person name="Buckel W."/>
        </authorList>
    </citation>
    <scope>PROTEIN SEQUENCE OF 1-23</scope>
    <source>
        <strain>ATCC 14963 / DSM 20463 / JCM 1765 / NCIMB 10074 / NCTC 11461 / UW 228</strain>
    </source>
</reference>
<dbReference type="EC" id="4.3.1.17"/>
<dbReference type="EMBL" id="U76260">
    <property type="protein sequence ID" value="AAC45546.1"/>
    <property type="molecule type" value="Genomic_DNA"/>
</dbReference>
<dbReference type="PIR" id="S16224">
    <property type="entry name" value="S16224"/>
</dbReference>
<dbReference type="SMR" id="P33073"/>
<dbReference type="BioCyc" id="MetaCyc:MONOMER-124241"/>
<dbReference type="UniPathway" id="UPA00138"/>
<dbReference type="GO" id="GO:0051539">
    <property type="term" value="F:4 iron, 4 sulfur cluster binding"/>
    <property type="evidence" value="ECO:0007669"/>
    <property type="project" value="UniProtKB-KW"/>
</dbReference>
<dbReference type="GO" id="GO:0003941">
    <property type="term" value="F:L-serine ammonia-lyase activity"/>
    <property type="evidence" value="ECO:0007669"/>
    <property type="project" value="UniProtKB-EC"/>
</dbReference>
<dbReference type="GO" id="GO:0046872">
    <property type="term" value="F:metal ion binding"/>
    <property type="evidence" value="ECO:0007669"/>
    <property type="project" value="UniProtKB-KW"/>
</dbReference>
<dbReference type="GO" id="GO:0006094">
    <property type="term" value="P:gluconeogenesis"/>
    <property type="evidence" value="ECO:0007669"/>
    <property type="project" value="UniProtKB-UniPathway"/>
</dbReference>
<dbReference type="InterPro" id="IPR051318">
    <property type="entry name" value="Fe-S_L-Ser"/>
</dbReference>
<dbReference type="InterPro" id="IPR005130">
    <property type="entry name" value="Ser_deHydtase-like_asu"/>
</dbReference>
<dbReference type="InterPro" id="IPR004642">
    <property type="entry name" value="Ser_deHydtase_asu"/>
</dbReference>
<dbReference type="NCBIfam" id="TIGR00718">
    <property type="entry name" value="sda_alpha"/>
    <property type="match status" value="1"/>
</dbReference>
<dbReference type="PANTHER" id="PTHR30182">
    <property type="entry name" value="L-SERINE DEHYDRATASE"/>
    <property type="match status" value="1"/>
</dbReference>
<dbReference type="PANTHER" id="PTHR30182:SF1">
    <property type="entry name" value="L-SERINE DEHYDRATASE 1"/>
    <property type="match status" value="1"/>
</dbReference>
<dbReference type="Pfam" id="PF03313">
    <property type="entry name" value="SDH_alpha"/>
    <property type="match status" value="1"/>
</dbReference>
<gene>
    <name type="primary">sdhA</name>
</gene>
<comment type="catalytic activity">
    <reaction>
        <text>L-serine = pyruvate + NH4(+)</text>
        <dbReference type="Rhea" id="RHEA:19169"/>
        <dbReference type="ChEBI" id="CHEBI:15361"/>
        <dbReference type="ChEBI" id="CHEBI:28938"/>
        <dbReference type="ChEBI" id="CHEBI:33384"/>
        <dbReference type="EC" id="4.3.1.17"/>
    </reaction>
</comment>
<comment type="cofactor">
    <cofactor>
        <name>[4Fe-4S] cluster</name>
        <dbReference type="ChEBI" id="CHEBI:49883"/>
    </cofactor>
    <text>Binds 1 [4Fe-4S] cluster.</text>
</comment>
<comment type="pathway">
    <text>Carbohydrate biosynthesis; gluconeogenesis.</text>
</comment>
<comment type="subunit">
    <text>Heterooctamer of four alpha chains and four beta chains.</text>
</comment>
<comment type="similarity">
    <text evidence="1">Belongs to the iron-sulfur dependent L-serine dehydratase family.</text>
</comment>
<evidence type="ECO:0000305" key="1"/>
<proteinExistence type="evidence at protein level"/>
<protein>
    <recommendedName>
        <fullName>L-serine dehydratase, alpha chain</fullName>
        <shortName>SDH</shortName>
        <ecNumber>4.3.1.17</ecNumber>
    </recommendedName>
    <alternativeName>
        <fullName>L-serine deaminase</fullName>
        <shortName>L-SD</shortName>
    </alternativeName>
</protein>
<organism>
    <name type="scientific">Peptoniphilus asaccharolyticus</name>
    <name type="common">Peptostreptococcus asaccharolyticus</name>
    <dbReference type="NCBI Taxonomy" id="1258"/>
    <lineage>
        <taxon>Bacteria</taxon>
        <taxon>Bacillati</taxon>
        <taxon>Bacillota</taxon>
        <taxon>Tissierellia</taxon>
        <taxon>Tissierellales</taxon>
        <taxon>Peptoniphilaceae</taxon>
        <taxon>Peptoniphilus</taxon>
    </lineage>
</organism>
<accession>P33073</accession>
<accession>O33922</accession>